<organism>
    <name type="scientific">Danio rerio</name>
    <name type="common">Zebrafish</name>
    <name type="synonym">Brachydanio rerio</name>
    <dbReference type="NCBI Taxonomy" id="7955"/>
    <lineage>
        <taxon>Eukaryota</taxon>
        <taxon>Metazoa</taxon>
        <taxon>Chordata</taxon>
        <taxon>Craniata</taxon>
        <taxon>Vertebrata</taxon>
        <taxon>Euteleostomi</taxon>
        <taxon>Actinopterygii</taxon>
        <taxon>Neopterygii</taxon>
        <taxon>Teleostei</taxon>
        <taxon>Ostariophysi</taxon>
        <taxon>Cypriniformes</taxon>
        <taxon>Danionidae</taxon>
        <taxon>Danioninae</taxon>
        <taxon>Danio</taxon>
    </lineage>
</organism>
<dbReference type="EMBL" id="BC052768">
    <property type="protein sequence ID" value="AAH52768.1"/>
    <property type="molecule type" value="mRNA"/>
</dbReference>
<dbReference type="EMBL" id="BC097063">
    <property type="protein sequence ID" value="AAH97063.1"/>
    <property type="molecule type" value="mRNA"/>
</dbReference>
<dbReference type="RefSeq" id="NP_998630.1">
    <property type="nucleotide sequence ID" value="NM_213465.1"/>
</dbReference>
<dbReference type="SMR" id="Q7SZE5"/>
<dbReference type="FunCoup" id="Q7SZE5">
    <property type="interactions" value="2582"/>
</dbReference>
<dbReference type="STRING" id="7955.ENSDARP00000137308"/>
<dbReference type="PaxDb" id="7955-ENSDARP00000116386"/>
<dbReference type="Ensembl" id="ENSDART00000160156">
    <property type="protein sequence ID" value="ENSDARP00000137308"/>
    <property type="gene ID" value="ENSDARG00000104230"/>
</dbReference>
<dbReference type="Ensembl" id="ENSDART00000168055">
    <property type="protein sequence ID" value="ENSDARP00000139718"/>
    <property type="gene ID" value="ENSDARG00000104230"/>
</dbReference>
<dbReference type="Ensembl" id="ENSDART00000169522">
    <property type="protein sequence ID" value="ENSDARP00000134628"/>
    <property type="gene ID" value="ENSDARG00000104230"/>
</dbReference>
<dbReference type="GeneID" id="406774"/>
<dbReference type="KEGG" id="dre:406774"/>
<dbReference type="AGR" id="ZFIN:ZDB-GENE-040426-2823"/>
<dbReference type="CTD" id="10484"/>
<dbReference type="ZFIN" id="ZDB-GENE-040426-2823">
    <property type="gene designation" value="sec23a"/>
</dbReference>
<dbReference type="eggNOG" id="KOG1986">
    <property type="taxonomic scope" value="Eukaryota"/>
</dbReference>
<dbReference type="HOGENOM" id="CLU_008658_3_0_1"/>
<dbReference type="InParanoid" id="Q7SZE5"/>
<dbReference type="OMA" id="FPPHYAE"/>
<dbReference type="OrthoDB" id="10256289at2759"/>
<dbReference type="PhylomeDB" id="Q7SZE5"/>
<dbReference type="TreeFam" id="TF300693"/>
<dbReference type="Reactome" id="R-DRE-204005">
    <property type="pathway name" value="COPII-mediated vesicle transport"/>
</dbReference>
<dbReference type="Reactome" id="R-DRE-2132295">
    <property type="pathway name" value="MHC class II antigen presentation"/>
</dbReference>
<dbReference type="Reactome" id="R-DRE-983170">
    <property type="pathway name" value="Antigen Presentation: Folding, assembly and peptide loading of class I MHC"/>
</dbReference>
<dbReference type="PRO" id="PR:Q7SZE5"/>
<dbReference type="Proteomes" id="UP000000437">
    <property type="component" value="Chromosome 17"/>
</dbReference>
<dbReference type="Bgee" id="ENSDARG00000104230">
    <property type="expression patterns" value="Expressed in presomitic mesoderm and 38 other cell types or tissues"/>
</dbReference>
<dbReference type="ExpressionAtlas" id="Q7SZE5">
    <property type="expression patterns" value="baseline and differential"/>
</dbReference>
<dbReference type="GO" id="GO:0030127">
    <property type="term" value="C:COPII vesicle coat"/>
    <property type="evidence" value="ECO:0000250"/>
    <property type="project" value="UniProtKB"/>
</dbReference>
<dbReference type="GO" id="GO:0005829">
    <property type="term" value="C:cytosol"/>
    <property type="evidence" value="ECO:0000250"/>
    <property type="project" value="UniProtKB"/>
</dbReference>
<dbReference type="GO" id="GO:0070971">
    <property type="term" value="C:endoplasmic reticulum exit site"/>
    <property type="evidence" value="ECO:0000250"/>
    <property type="project" value="UniProtKB"/>
</dbReference>
<dbReference type="GO" id="GO:0005789">
    <property type="term" value="C:endoplasmic reticulum membrane"/>
    <property type="evidence" value="ECO:0007669"/>
    <property type="project" value="UniProtKB-SubCell"/>
</dbReference>
<dbReference type="GO" id="GO:0005096">
    <property type="term" value="F:GTPase activator activity"/>
    <property type="evidence" value="ECO:0000318"/>
    <property type="project" value="GO_Central"/>
</dbReference>
<dbReference type="GO" id="GO:0008270">
    <property type="term" value="F:zinc ion binding"/>
    <property type="evidence" value="ECO:0000250"/>
    <property type="project" value="UniProtKB"/>
</dbReference>
<dbReference type="GO" id="GO:0051216">
    <property type="term" value="P:cartilage development"/>
    <property type="evidence" value="ECO:0000315"/>
    <property type="project" value="ZFIN"/>
</dbReference>
<dbReference type="GO" id="GO:0090110">
    <property type="term" value="P:COPII-coated vesicle cargo loading"/>
    <property type="evidence" value="ECO:0000250"/>
    <property type="project" value="UniProtKB"/>
</dbReference>
<dbReference type="GO" id="GO:0048702">
    <property type="term" value="P:embryonic neurocranium morphogenesis"/>
    <property type="evidence" value="ECO:0000315"/>
    <property type="project" value="ZFIN"/>
</dbReference>
<dbReference type="GO" id="GO:0006886">
    <property type="term" value="P:intracellular protein transport"/>
    <property type="evidence" value="ECO:0007669"/>
    <property type="project" value="InterPro"/>
</dbReference>
<dbReference type="GO" id="GO:0035138">
    <property type="term" value="P:pectoral fin morphogenesis"/>
    <property type="evidence" value="ECO:0000315"/>
    <property type="project" value="ZFIN"/>
</dbReference>
<dbReference type="GO" id="GO:0006605">
    <property type="term" value="P:protein targeting"/>
    <property type="evidence" value="ECO:0000315"/>
    <property type="project" value="ZFIN"/>
</dbReference>
<dbReference type="CDD" id="cd01478">
    <property type="entry name" value="Sec23-like"/>
    <property type="match status" value="1"/>
</dbReference>
<dbReference type="CDD" id="cd11287">
    <property type="entry name" value="Sec23_C"/>
    <property type="match status" value="1"/>
</dbReference>
<dbReference type="FunFam" id="1.20.120.730:FF:000003">
    <property type="entry name" value="Protein transport protein SEC23"/>
    <property type="match status" value="1"/>
</dbReference>
<dbReference type="FunFam" id="2.30.30.380:FF:000001">
    <property type="entry name" value="Protein transport protein SEC23"/>
    <property type="match status" value="1"/>
</dbReference>
<dbReference type="FunFam" id="2.60.40.1670:FF:000006">
    <property type="entry name" value="Protein transport protein SEC23"/>
    <property type="match status" value="1"/>
</dbReference>
<dbReference type="FunFam" id="3.40.20.10:FF:000003">
    <property type="entry name" value="Protein transport protein SEC23"/>
    <property type="match status" value="1"/>
</dbReference>
<dbReference type="FunFam" id="3.40.50.410:FF:000011">
    <property type="entry name" value="Protein transport protein SEC23"/>
    <property type="match status" value="1"/>
</dbReference>
<dbReference type="Gene3D" id="2.60.40.1670">
    <property type="entry name" value="beta-sandwich domain of Sec23/24"/>
    <property type="match status" value="1"/>
</dbReference>
<dbReference type="Gene3D" id="1.20.120.730">
    <property type="entry name" value="Sec23/Sec24 helical domain"/>
    <property type="match status" value="1"/>
</dbReference>
<dbReference type="Gene3D" id="3.40.20.10">
    <property type="entry name" value="Severin"/>
    <property type="match status" value="1"/>
</dbReference>
<dbReference type="Gene3D" id="3.40.50.410">
    <property type="entry name" value="von Willebrand factor, type A domain"/>
    <property type="match status" value="1"/>
</dbReference>
<dbReference type="Gene3D" id="2.30.30.380">
    <property type="entry name" value="Zn-finger domain of Sec23/24"/>
    <property type="match status" value="1"/>
</dbReference>
<dbReference type="InterPro" id="IPR029006">
    <property type="entry name" value="ADF-H/Gelsolin-like_dom_sf"/>
</dbReference>
<dbReference type="InterPro" id="IPR007123">
    <property type="entry name" value="Gelsolin-like_dom"/>
</dbReference>
<dbReference type="InterPro" id="IPR036180">
    <property type="entry name" value="Gelsolin-like_dom_sf"/>
</dbReference>
<dbReference type="InterPro" id="IPR037364">
    <property type="entry name" value="Sec23"/>
</dbReference>
<dbReference type="InterPro" id="IPR006900">
    <property type="entry name" value="Sec23/24_helical_dom"/>
</dbReference>
<dbReference type="InterPro" id="IPR036175">
    <property type="entry name" value="Sec23/24_helical_dom_sf"/>
</dbReference>
<dbReference type="InterPro" id="IPR006896">
    <property type="entry name" value="Sec23/24_trunk_dom"/>
</dbReference>
<dbReference type="InterPro" id="IPR012990">
    <property type="entry name" value="Sec23_24_beta_S"/>
</dbReference>
<dbReference type="InterPro" id="IPR037550">
    <property type="entry name" value="Sec23_C"/>
</dbReference>
<dbReference type="InterPro" id="IPR036465">
    <property type="entry name" value="vWFA_dom_sf"/>
</dbReference>
<dbReference type="InterPro" id="IPR006895">
    <property type="entry name" value="Znf_Sec23_Sec24"/>
</dbReference>
<dbReference type="InterPro" id="IPR036174">
    <property type="entry name" value="Znf_Sec23_Sec24_sf"/>
</dbReference>
<dbReference type="PANTHER" id="PTHR11141">
    <property type="entry name" value="PROTEIN TRANSPORT PROTEIN SEC23"/>
    <property type="match status" value="1"/>
</dbReference>
<dbReference type="PANTHER" id="PTHR11141:SF7">
    <property type="entry name" value="PROTEIN TRANSPORT PROTEIN SEC23A"/>
    <property type="match status" value="1"/>
</dbReference>
<dbReference type="Pfam" id="PF00626">
    <property type="entry name" value="Gelsolin"/>
    <property type="match status" value="1"/>
</dbReference>
<dbReference type="Pfam" id="PF08033">
    <property type="entry name" value="Sec23_BS"/>
    <property type="match status" value="1"/>
</dbReference>
<dbReference type="Pfam" id="PF04815">
    <property type="entry name" value="Sec23_helical"/>
    <property type="match status" value="1"/>
</dbReference>
<dbReference type="Pfam" id="PF04811">
    <property type="entry name" value="Sec23_trunk"/>
    <property type="match status" value="1"/>
</dbReference>
<dbReference type="Pfam" id="PF04810">
    <property type="entry name" value="zf-Sec23_Sec24"/>
    <property type="match status" value="1"/>
</dbReference>
<dbReference type="SUPFAM" id="SSF81995">
    <property type="entry name" value="beta-sandwich domain of Sec23/24"/>
    <property type="match status" value="1"/>
</dbReference>
<dbReference type="SUPFAM" id="SSF82754">
    <property type="entry name" value="C-terminal, gelsolin-like domain of Sec23/24"/>
    <property type="match status" value="1"/>
</dbReference>
<dbReference type="SUPFAM" id="SSF81811">
    <property type="entry name" value="Helical domain of Sec23/24"/>
    <property type="match status" value="1"/>
</dbReference>
<dbReference type="SUPFAM" id="SSF53300">
    <property type="entry name" value="vWA-like"/>
    <property type="match status" value="1"/>
</dbReference>
<dbReference type="SUPFAM" id="SSF82919">
    <property type="entry name" value="Zn-finger domain of Sec23/24"/>
    <property type="match status" value="1"/>
</dbReference>
<accession>Q7SZE5</accession>
<accession>Q4V948</accession>
<name>SC23A_DANRE</name>
<feature type="chain" id="PRO_0000318934" description="Protein transport protein Sec23A">
    <location>
        <begin position="1"/>
        <end position="765"/>
    </location>
</feature>
<feature type="repeat" description="Gelsolin-like" evidence="2">
    <location>
        <begin position="632"/>
        <end position="718"/>
    </location>
</feature>
<feature type="binding site" evidence="1">
    <location>
        <position position="61"/>
    </location>
    <ligand>
        <name>Zn(2+)</name>
        <dbReference type="ChEBI" id="CHEBI:29105"/>
    </ligand>
</feature>
<feature type="binding site" evidence="1">
    <location>
        <position position="66"/>
    </location>
    <ligand>
        <name>Zn(2+)</name>
        <dbReference type="ChEBI" id="CHEBI:29105"/>
    </ligand>
</feature>
<feature type="binding site" evidence="1">
    <location>
        <position position="85"/>
    </location>
    <ligand>
        <name>Zn(2+)</name>
        <dbReference type="ChEBI" id="CHEBI:29105"/>
    </ligand>
</feature>
<feature type="binding site" evidence="1">
    <location>
        <position position="88"/>
    </location>
    <ligand>
        <name>Zn(2+)</name>
        <dbReference type="ChEBI" id="CHEBI:29105"/>
    </ligand>
</feature>
<feature type="sequence conflict" description="In Ref. 1; AAH97063." evidence="3" ref="1">
    <original>F</original>
    <variation>L</variation>
    <location>
        <position position="580"/>
    </location>
</feature>
<sequence length="765" mass="86080">MATFQEFIQQNEDRDGVRFSWNVWPSSRLEATRMVVPVASLFTPLKERPDLPPIQYEPVLCSRATCRAVLNPLCQVDYRAKLWACNFCYQRNQFPPTYAGISEVNQPAELLPQFSTIEYVVQRGPQMPLNFLYVVDTCMEDDDLQALKESLQMSLSLLPPTALVGLITFGRMVQVHELGCEGISKSYVFRGTKDLNAKQLQEMLGLTKPAAAQAGRGPQQPQVPPSNRFLQPVQKIDMNLTDLLGELQRDPWPVTQGKRPLRSLGVALSIAVGLLECTFPNTGARIMAFIGGPATQGPGMVVGDELKTPIRSWHDIEKDNAKFMKKATKHYEALANRAAANGHIIDIYACALDQTGLLEMKCCTNYTGGYMVMADSFNTSLFKQTFQRVFTKDVQGCFKMALAGTLEIKTSREIKISGAIGPCVSLNAKGPCVSENEMGTGGTSQWKICGLDPNTTLGFYFEVVNQHNAPIPQGGRGAIQYVTQYQHSSGQRRIRVTTIARNWADAQSQIQSIAASFDQEAAAILMARLAVYKAETEEGPDVLRWLDRQLIRLCQKFGDYHKEDPNSFRFSETFSLYPQFMFHLRRSPFLQVFNNSPDESTYYRHQFMRQDLTQSLIMVQPILYAYSFNGPPEPVLLDSSSILPDRILLMDTFFQILIYHGETVSQWRKAGYQDMPEYENFRHLLQAPVDDAQELLHTRFPMPRYIDTEHGGSQARFLLSKVNPSQTHNNMYAWGQESGAPILTDDVSLQVFMDHLKKLAVSSAA</sequence>
<evidence type="ECO:0000250" key="1">
    <source>
        <dbReference type="UniProtKB" id="Q15436"/>
    </source>
</evidence>
<evidence type="ECO:0000255" key="2"/>
<evidence type="ECO:0000305" key="3"/>
<keyword id="KW-0963">Cytoplasm</keyword>
<keyword id="KW-0968">Cytoplasmic vesicle</keyword>
<keyword id="KW-0256">Endoplasmic reticulum</keyword>
<keyword id="KW-0931">ER-Golgi transport</keyword>
<keyword id="KW-0472">Membrane</keyword>
<keyword id="KW-0479">Metal-binding</keyword>
<keyword id="KW-0653">Protein transport</keyword>
<keyword id="KW-1185">Reference proteome</keyword>
<keyword id="KW-0813">Transport</keyword>
<keyword id="KW-0862">Zinc</keyword>
<protein>
    <recommendedName>
        <fullName evidence="3">Protein transport protein Sec23A</fullName>
    </recommendedName>
    <alternativeName>
        <fullName>SEC23-related protein A</fullName>
    </alternativeName>
</protein>
<proteinExistence type="evidence at transcript level"/>
<reference key="1">
    <citation type="submission" date="2003-05" db="EMBL/GenBank/DDBJ databases">
        <authorList>
            <consortium name="NIH - Zebrafish Gene Collection (ZGC) project"/>
        </authorList>
    </citation>
    <scope>NUCLEOTIDE SEQUENCE [LARGE SCALE MRNA]</scope>
    <source>
        <strain>AB</strain>
    </source>
</reference>
<comment type="function">
    <text evidence="1">Component of the coat protein complex II (COPII) which promotes the formation of transport vesicles from the endoplasmic reticulum (ER). The coat has two main functions, the physical deformation of the endoplasmic reticulum membrane into vesicles and the selection of cargo molecules for their transport to the Golgi complex.</text>
</comment>
<comment type="subunit">
    <text evidence="1">COPII is composed of at least five proteins: the Sec23/24 complex, the Sec13/31 complex and Sar1.</text>
</comment>
<comment type="subcellular location">
    <subcellularLocation>
        <location evidence="1">Cytoplasmic vesicle</location>
        <location evidence="1">COPII-coated vesicle membrane</location>
        <topology evidence="1">Peripheral membrane protein</topology>
        <orientation evidence="1">Cytoplasmic side</orientation>
    </subcellularLocation>
    <subcellularLocation>
        <location evidence="1">Endoplasmic reticulum membrane</location>
        <topology evidence="1">Peripheral membrane protein</topology>
        <orientation evidence="1">Cytoplasmic side</orientation>
    </subcellularLocation>
    <subcellularLocation>
        <location evidence="1">Cytoplasm</location>
        <location evidence="1">Cytosol</location>
    </subcellularLocation>
    <text evidence="1">Enriched at endoplasmic reticulum exit sites (ERES), also known as transitional endoplasmic reticulum (tER).</text>
</comment>
<comment type="domain">
    <text evidence="1">The Gelsolin-like repeat mediates interaction with proteins containing PPP motifs.</text>
</comment>
<comment type="similarity">
    <text evidence="3">Belongs to the SEC23/SEC24 family. SEC23 subfamily.</text>
</comment>
<gene>
    <name evidence="1" type="primary">sec23a</name>
</gene>